<name>WHIA_MYCA1</name>
<organism>
    <name type="scientific">Mycobacterium avium (strain 104)</name>
    <dbReference type="NCBI Taxonomy" id="243243"/>
    <lineage>
        <taxon>Bacteria</taxon>
        <taxon>Bacillati</taxon>
        <taxon>Actinomycetota</taxon>
        <taxon>Actinomycetes</taxon>
        <taxon>Mycobacteriales</taxon>
        <taxon>Mycobacteriaceae</taxon>
        <taxon>Mycobacterium</taxon>
        <taxon>Mycobacterium avium complex (MAC)</taxon>
    </lineage>
</organism>
<protein>
    <recommendedName>
        <fullName evidence="1">Probable cell division protein WhiA</fullName>
    </recommendedName>
</protein>
<reference key="1">
    <citation type="submission" date="2006-10" db="EMBL/GenBank/DDBJ databases">
        <authorList>
            <person name="Fleischmann R.D."/>
            <person name="Dodson R.J."/>
            <person name="Haft D.H."/>
            <person name="Merkel J.S."/>
            <person name="Nelson W.C."/>
            <person name="Fraser C.M."/>
        </authorList>
    </citation>
    <scope>NUCLEOTIDE SEQUENCE [LARGE SCALE GENOMIC DNA]</scope>
    <source>
        <strain>104</strain>
    </source>
</reference>
<evidence type="ECO:0000255" key="1">
    <source>
        <dbReference type="HAMAP-Rule" id="MF_01420"/>
    </source>
</evidence>
<gene>
    <name evidence="1" type="primary">whiA</name>
    <name type="ordered locus">MAV_3357</name>
</gene>
<accession>A0QI01</accession>
<comment type="function">
    <text evidence="1">Involved in cell division and chromosome segregation.</text>
</comment>
<comment type="similarity">
    <text evidence="1">Belongs to the WhiA family.</text>
</comment>
<sequence>MAMTTEVKDELSRLVVKSVSARRAEVTSLLRFAGGLHIVGGRVVVEAEVDLGNVARRLRKDIFELYGYNAVVHVLSASGIRKSTRYVLRVANDGEALARQTGLLDNRGRPVRGLPAQVVGGSIADAEAAWRGAFLAHGSLTEPGRSSALEVSCPGPEAALALVGAARRLGVSAKAREVRGADRVVVRDGEAIGALLTRMGAQDTRLIWEERRMRREVRATANRLANFDDANLRRSARAAVAAAARVERALEILGDTVPDHLASAGKLRVEHRQASLEELGRLADPPMTKDAVAGRIRRLLSMADRKAKIEGIPDTESAVTPDLLEDA</sequence>
<dbReference type="EMBL" id="CP000479">
    <property type="protein sequence ID" value="ABK69281.1"/>
    <property type="molecule type" value="Genomic_DNA"/>
</dbReference>
<dbReference type="SMR" id="A0QI01"/>
<dbReference type="KEGG" id="mav:MAV_3357"/>
<dbReference type="HOGENOM" id="CLU_053282_0_0_11"/>
<dbReference type="Proteomes" id="UP000001574">
    <property type="component" value="Chromosome"/>
</dbReference>
<dbReference type="GO" id="GO:0003677">
    <property type="term" value="F:DNA binding"/>
    <property type="evidence" value="ECO:0007669"/>
    <property type="project" value="UniProtKB-UniRule"/>
</dbReference>
<dbReference type="GO" id="GO:0051301">
    <property type="term" value="P:cell division"/>
    <property type="evidence" value="ECO:0007669"/>
    <property type="project" value="UniProtKB-UniRule"/>
</dbReference>
<dbReference type="GO" id="GO:0043937">
    <property type="term" value="P:regulation of sporulation"/>
    <property type="evidence" value="ECO:0007669"/>
    <property type="project" value="InterPro"/>
</dbReference>
<dbReference type="FunFam" id="3.10.28.10:FF:000001">
    <property type="entry name" value="Probable cell division protein WhiA"/>
    <property type="match status" value="1"/>
</dbReference>
<dbReference type="Gene3D" id="3.10.28.10">
    <property type="entry name" value="Homing endonucleases"/>
    <property type="match status" value="1"/>
</dbReference>
<dbReference type="HAMAP" id="MF_01420">
    <property type="entry name" value="HTH_type_WhiA"/>
    <property type="match status" value="1"/>
</dbReference>
<dbReference type="InterPro" id="IPR027434">
    <property type="entry name" value="Homing_endonucl"/>
</dbReference>
<dbReference type="InterPro" id="IPR018478">
    <property type="entry name" value="Sporu_reg_WhiA_N_dom"/>
</dbReference>
<dbReference type="InterPro" id="IPR003802">
    <property type="entry name" value="Sporulation_regulator_WhiA"/>
</dbReference>
<dbReference type="InterPro" id="IPR023054">
    <property type="entry name" value="Sporulation_regulator_WhiA_C"/>
</dbReference>
<dbReference type="InterPro" id="IPR039518">
    <property type="entry name" value="WhiA_LAGLIDADG_dom"/>
</dbReference>
<dbReference type="NCBIfam" id="TIGR00647">
    <property type="entry name" value="DNA_bind_WhiA"/>
    <property type="match status" value="1"/>
</dbReference>
<dbReference type="PANTHER" id="PTHR37307">
    <property type="entry name" value="CELL DIVISION PROTEIN WHIA-RELATED"/>
    <property type="match status" value="1"/>
</dbReference>
<dbReference type="PANTHER" id="PTHR37307:SF1">
    <property type="entry name" value="CELL DIVISION PROTEIN WHIA-RELATED"/>
    <property type="match status" value="1"/>
</dbReference>
<dbReference type="Pfam" id="PF02650">
    <property type="entry name" value="HTH_WhiA"/>
    <property type="match status" value="1"/>
</dbReference>
<dbReference type="Pfam" id="PF14527">
    <property type="entry name" value="LAGLIDADG_WhiA"/>
    <property type="match status" value="1"/>
</dbReference>
<dbReference type="Pfam" id="PF10298">
    <property type="entry name" value="WhiA_N"/>
    <property type="match status" value="1"/>
</dbReference>
<feature type="chain" id="PRO_0000376522" description="Probable cell division protein WhiA">
    <location>
        <begin position="1"/>
        <end position="327"/>
    </location>
</feature>
<feature type="DNA-binding region" description="H-T-H motif" evidence="1">
    <location>
        <begin position="275"/>
        <end position="308"/>
    </location>
</feature>
<keyword id="KW-0131">Cell cycle</keyword>
<keyword id="KW-0132">Cell division</keyword>
<keyword id="KW-0238">DNA-binding</keyword>
<proteinExistence type="inferred from homology"/>